<accession>Q9UZT5</accession>
<accession>G8ZJL2</accession>
<name>GLMM_PYRAB</name>
<feature type="chain" id="PRO_0000337822" description="Probable phosphoglucosamine mutase">
    <location>
        <begin position="1"/>
        <end position="451"/>
    </location>
</feature>
<feature type="active site" description="Phosphoserine intermediate" evidence="1">
    <location>
        <position position="96"/>
    </location>
</feature>
<feature type="binding site" description="via phosphate group" evidence="1">
    <location>
        <position position="96"/>
    </location>
    <ligand>
        <name>Mg(2+)</name>
        <dbReference type="ChEBI" id="CHEBI:18420"/>
    </ligand>
</feature>
<feature type="binding site" evidence="1">
    <location>
        <position position="233"/>
    </location>
    <ligand>
        <name>Mg(2+)</name>
        <dbReference type="ChEBI" id="CHEBI:18420"/>
    </ligand>
</feature>
<feature type="binding site" evidence="1">
    <location>
        <position position="235"/>
    </location>
    <ligand>
        <name>Mg(2+)</name>
        <dbReference type="ChEBI" id="CHEBI:18420"/>
    </ligand>
</feature>
<feature type="binding site" evidence="1">
    <location>
        <position position="237"/>
    </location>
    <ligand>
        <name>Mg(2+)</name>
        <dbReference type="ChEBI" id="CHEBI:18420"/>
    </ligand>
</feature>
<feature type="modified residue" description="Phosphoserine" evidence="1">
    <location>
        <position position="96"/>
    </location>
</feature>
<comment type="function">
    <text evidence="1">Catalyzes the conversion of glucosamine-6-phosphate to glucosamine-1-phosphate.</text>
</comment>
<comment type="catalytic activity">
    <reaction evidence="1">
        <text>alpha-D-glucosamine 1-phosphate = D-glucosamine 6-phosphate</text>
        <dbReference type="Rhea" id="RHEA:23424"/>
        <dbReference type="ChEBI" id="CHEBI:58516"/>
        <dbReference type="ChEBI" id="CHEBI:58725"/>
        <dbReference type="EC" id="5.4.2.10"/>
    </reaction>
</comment>
<comment type="cofactor">
    <cofactor evidence="1">
        <name>Mg(2+)</name>
        <dbReference type="ChEBI" id="CHEBI:18420"/>
    </cofactor>
    <text evidence="1">Binds 1 Mg(2+) ion per subunit.</text>
</comment>
<comment type="PTM">
    <text evidence="1">Activated by phosphorylation.</text>
</comment>
<comment type="similarity">
    <text evidence="1">Belongs to the phosphohexose mutase family.</text>
</comment>
<organism>
    <name type="scientific">Pyrococcus abyssi (strain GE5 / Orsay)</name>
    <dbReference type="NCBI Taxonomy" id="272844"/>
    <lineage>
        <taxon>Archaea</taxon>
        <taxon>Methanobacteriati</taxon>
        <taxon>Methanobacteriota</taxon>
        <taxon>Thermococci</taxon>
        <taxon>Thermococcales</taxon>
        <taxon>Thermococcaceae</taxon>
        <taxon>Pyrococcus</taxon>
    </lineage>
</organism>
<evidence type="ECO:0000255" key="1">
    <source>
        <dbReference type="HAMAP-Rule" id="MF_01554"/>
    </source>
</evidence>
<proteinExistence type="inferred from homology"/>
<reference key="1">
    <citation type="journal article" date="2003" name="Mol. Microbiol.">
        <title>An integrated analysis of the genome of the hyperthermophilic archaeon Pyrococcus abyssi.</title>
        <authorList>
            <person name="Cohen G.N."/>
            <person name="Barbe V."/>
            <person name="Flament D."/>
            <person name="Galperin M."/>
            <person name="Heilig R."/>
            <person name="Lecompte O."/>
            <person name="Poch O."/>
            <person name="Prieur D."/>
            <person name="Querellou J."/>
            <person name="Ripp R."/>
            <person name="Thierry J.-C."/>
            <person name="Van der Oost J."/>
            <person name="Weissenbach J."/>
            <person name="Zivanovic Y."/>
            <person name="Forterre P."/>
        </authorList>
    </citation>
    <scope>NUCLEOTIDE SEQUENCE [LARGE SCALE GENOMIC DNA]</scope>
    <source>
        <strain>GE5 / Orsay</strain>
    </source>
</reference>
<reference key="2">
    <citation type="journal article" date="2012" name="Curr. Microbiol.">
        <title>Re-annotation of two hyperthermophilic archaea Pyrococcus abyssi GE5 and Pyrococcus furiosus DSM 3638.</title>
        <authorList>
            <person name="Gao J."/>
            <person name="Wang J."/>
        </authorList>
    </citation>
    <scope>GENOME REANNOTATION</scope>
    <source>
        <strain>GE5 / Orsay</strain>
    </source>
</reference>
<dbReference type="EC" id="5.4.2.10" evidence="1"/>
<dbReference type="EMBL" id="AJ248286">
    <property type="protein sequence ID" value="CAB49971.1"/>
    <property type="molecule type" value="Genomic_DNA"/>
</dbReference>
<dbReference type="EMBL" id="HE613800">
    <property type="protein sequence ID" value="CCE70471.1"/>
    <property type="molecule type" value="Genomic_DNA"/>
</dbReference>
<dbReference type="PIR" id="F75083">
    <property type="entry name" value="F75083"/>
</dbReference>
<dbReference type="RefSeq" id="WP_010868179.1">
    <property type="nucleotide sequence ID" value="NC_000868.1"/>
</dbReference>
<dbReference type="SMR" id="Q9UZT5"/>
<dbReference type="STRING" id="272844.PAB1666"/>
<dbReference type="KEGG" id="pab:PAB1666"/>
<dbReference type="PATRIC" id="fig|272844.11.peg.1116"/>
<dbReference type="eggNOG" id="arCOG00767">
    <property type="taxonomic scope" value="Archaea"/>
</dbReference>
<dbReference type="HOGENOM" id="CLU_016950_7_1_2"/>
<dbReference type="OrthoDB" id="10363at2157"/>
<dbReference type="PhylomeDB" id="Q9UZT5"/>
<dbReference type="Proteomes" id="UP000000810">
    <property type="component" value="Chromosome"/>
</dbReference>
<dbReference type="Proteomes" id="UP000009139">
    <property type="component" value="Chromosome"/>
</dbReference>
<dbReference type="GO" id="GO:0000287">
    <property type="term" value="F:magnesium ion binding"/>
    <property type="evidence" value="ECO:0007669"/>
    <property type="project" value="UniProtKB-UniRule"/>
</dbReference>
<dbReference type="GO" id="GO:0008966">
    <property type="term" value="F:phosphoglucosamine mutase activity"/>
    <property type="evidence" value="ECO:0007669"/>
    <property type="project" value="UniProtKB-UniRule"/>
</dbReference>
<dbReference type="GO" id="GO:0005975">
    <property type="term" value="P:carbohydrate metabolic process"/>
    <property type="evidence" value="ECO:0007669"/>
    <property type="project" value="InterPro"/>
</dbReference>
<dbReference type="CDD" id="cd03087">
    <property type="entry name" value="PGM_like1"/>
    <property type="match status" value="1"/>
</dbReference>
<dbReference type="FunFam" id="3.40.120.10:FF:000001">
    <property type="entry name" value="Phosphoglucosamine mutase"/>
    <property type="match status" value="1"/>
</dbReference>
<dbReference type="FunFam" id="3.30.310.50:FF:000009">
    <property type="entry name" value="Probable phosphoglucosamine mutase"/>
    <property type="match status" value="1"/>
</dbReference>
<dbReference type="Gene3D" id="3.40.120.10">
    <property type="entry name" value="Alpha-D-Glucose-1,6-Bisphosphate, subunit A, domain 3"/>
    <property type="match status" value="3"/>
</dbReference>
<dbReference type="Gene3D" id="3.30.310.50">
    <property type="entry name" value="Alpha-D-phosphohexomutase, C-terminal domain"/>
    <property type="match status" value="1"/>
</dbReference>
<dbReference type="HAMAP" id="MF_01554_A">
    <property type="entry name" value="GlmM_A"/>
    <property type="match status" value="1"/>
</dbReference>
<dbReference type="InterPro" id="IPR005844">
    <property type="entry name" value="A-D-PHexomutase_a/b/a-I"/>
</dbReference>
<dbReference type="InterPro" id="IPR016055">
    <property type="entry name" value="A-D-PHexomutase_a/b/a-I/II/III"/>
</dbReference>
<dbReference type="InterPro" id="IPR005845">
    <property type="entry name" value="A-D-PHexomutase_a/b/a-II"/>
</dbReference>
<dbReference type="InterPro" id="IPR005846">
    <property type="entry name" value="A-D-PHexomutase_a/b/a-III"/>
</dbReference>
<dbReference type="InterPro" id="IPR005843">
    <property type="entry name" value="A-D-PHexomutase_C"/>
</dbReference>
<dbReference type="InterPro" id="IPR036900">
    <property type="entry name" value="A-D-PHexomutase_C_sf"/>
</dbReference>
<dbReference type="InterPro" id="IPR016066">
    <property type="entry name" value="A-D-PHexomutase_CS"/>
</dbReference>
<dbReference type="InterPro" id="IPR005841">
    <property type="entry name" value="Alpha-D-phosphohexomutase_SF"/>
</dbReference>
<dbReference type="InterPro" id="IPR023666">
    <property type="entry name" value="GlmM_arc"/>
</dbReference>
<dbReference type="InterPro" id="IPR024086">
    <property type="entry name" value="GlmM_arc-type"/>
</dbReference>
<dbReference type="NCBIfam" id="TIGR03990">
    <property type="entry name" value="Arch_GlmM"/>
    <property type="match status" value="1"/>
</dbReference>
<dbReference type="PANTHER" id="PTHR43771">
    <property type="entry name" value="PHOSPHOMANNOMUTASE"/>
    <property type="match status" value="1"/>
</dbReference>
<dbReference type="PANTHER" id="PTHR43771:SF1">
    <property type="entry name" value="PHOSPHOMANNOMUTASE"/>
    <property type="match status" value="1"/>
</dbReference>
<dbReference type="Pfam" id="PF02878">
    <property type="entry name" value="PGM_PMM_I"/>
    <property type="match status" value="1"/>
</dbReference>
<dbReference type="Pfam" id="PF02879">
    <property type="entry name" value="PGM_PMM_II"/>
    <property type="match status" value="1"/>
</dbReference>
<dbReference type="Pfam" id="PF02880">
    <property type="entry name" value="PGM_PMM_III"/>
    <property type="match status" value="1"/>
</dbReference>
<dbReference type="Pfam" id="PF00408">
    <property type="entry name" value="PGM_PMM_IV"/>
    <property type="match status" value="1"/>
</dbReference>
<dbReference type="PRINTS" id="PR00509">
    <property type="entry name" value="PGMPMM"/>
</dbReference>
<dbReference type="SUPFAM" id="SSF55957">
    <property type="entry name" value="Phosphoglucomutase, C-terminal domain"/>
    <property type="match status" value="1"/>
</dbReference>
<dbReference type="SUPFAM" id="SSF53738">
    <property type="entry name" value="Phosphoglucomutase, first 3 domains"/>
    <property type="match status" value="3"/>
</dbReference>
<dbReference type="PROSITE" id="PS00710">
    <property type="entry name" value="PGM_PMM"/>
    <property type="match status" value="1"/>
</dbReference>
<protein>
    <recommendedName>
        <fullName evidence="1">Probable phosphoglucosamine mutase</fullName>
        <ecNumber evidence="1">5.4.2.10</ecNumber>
    </recommendedName>
</protein>
<sequence>MGKYFGTSGIREVVNEKLTPELALKVGLALGTYLNGGRVVIGNDTRTSSEMLKKAVISGLLASGVDVIDIGLAPTPLVGFAIKLYDADAGVTITASHNPPEYNGIKVWDRNGMAYTPEKERELERIIEEEKFKRAPWNEIGQLKQANPREEYIEAIMKEIKLDNSYTVVIDPGNGAGSIISPYLHRELGNRVITINSDPHGFFVRELEPNKESLSMLAKTVKALKADIGIAHDGDADRVGVVDENGEFVEYEVMLSLIAGYMLRKYGKGKVVTTVDAGFALDDYVRGLGGEVVRTRVGDVAVAEELMKHGGVFGGEPSGTWIMPQWNLTPDGIFAGALVLEMIDRLGLIGELAKEVPRYVTLRKKIPCPNDLKAKAMEEIAKLIPREFSYEREITIDGIRIENDDWWILFRPSGTEPIMRITLEAHTKERAESLMEKAEKLVKDAIKKASS</sequence>
<gene>
    <name evidence="1" type="primary">glmM</name>
    <name type="ordered locus">PYRAB10610</name>
    <name type="ORF">PAB1666</name>
</gene>
<keyword id="KW-0413">Isomerase</keyword>
<keyword id="KW-0460">Magnesium</keyword>
<keyword id="KW-0479">Metal-binding</keyword>
<keyword id="KW-0597">Phosphoprotein</keyword>